<organism>
    <name type="scientific">Bifidobacterium adolescentis (strain ATCC 15703 / DSM 20083 / NCTC 11814 / E194a)</name>
    <dbReference type="NCBI Taxonomy" id="367928"/>
    <lineage>
        <taxon>Bacteria</taxon>
        <taxon>Bacillati</taxon>
        <taxon>Actinomycetota</taxon>
        <taxon>Actinomycetes</taxon>
        <taxon>Bifidobacteriales</taxon>
        <taxon>Bifidobacteriaceae</taxon>
        <taxon>Bifidobacterium</taxon>
    </lineage>
</organism>
<accession>A1A316</accession>
<sequence length="1337" mass="148153">MLDVNEFDKLRIGLATADDIRNWSYGEVKKPETINYRTLKPEKDGLFGEQIFGPTRDWECACGKYKRVRFKGIVCERCGVEVTKSRVRRERMGHIELAAPVTHIWFFKGVPSRLGYLLDIAPKDLEKVIYFAAYMVTKVDEEQRHQDLPDLQQEFDNEIANLEKRRNAEIEERAKKVEADLAELEAEGEAKGSARAKLRNSAEREMAAIRTRYDEQIQRLSAVFDRFKTLKPGDMEGDVDLWREMEDRYGDYFEGCMGAEAIKKRLQDFDLEAASKQLREEIDTGTGQRKARALKRLKVVNAFLTTGNKPEAMVLDVIPVIPPDLRPMVQLDGGRFATSDLNDLYRRVINRNNRLKRLIELGAPEIMLNNEKRMLQEAVDSLFDNGRRGRPVTGASNRPLKSLSDMLKGKQGRFRQNLLGKRVDYSGRSVIVVGPSLRMHQCGLPKPMALELFKPFVIKRLVDQGFAQNMKSAKRLVDRADSEVWGVLEEVISEHPVLLNRAPTLHRLGIQAFEPILVEGKAIHLPPLACAAFNADFDGDQMAVHLPLSAEAQAEARSLMMASDNILKPADGHTVTMPSQDMILGLYYLTTVIDGAKGQGRVFSSLEEAEMALDKHEIDMQAKVLIRLPQDFVLPKDWEPGEVKVVDPEPGSPDVVKEERFHDGSVLFATSYGRILFNGTLPVDYPFVNEQAPKKRLSKIVDDIATRYSTAQVAATLDALKDLGFTRAPWSGVSFAFSDVIQPPELDEYIEKYEGEADKVNENYEIGMLTEEERRQELVDLWTKCTSEVSEAVEEHFDSKNNLAIIVQSGARGNMMQINQIAGMRGLVANPKGEIIPRPVKSNYRKGLSVLEYFISQHGARKGLADTALRTAESGYLTRRLVDVSQDVIVREEDCGTKRGLTMKVGERDAEGNLHLVKAADGGPYSRLLAADVIDPADGETVLYKAGDALSMDVLNDLVAHGVEEVKARSVLTCESKRGVCAKCYGWSLATNKLVDVGEAVGIVAAQSIGEPGTQLTLRSFHSGGVASASDITQGLPRVTELFEARTPKGEAPIAEFAGVVKVEDTERGRQVTLKPDDDSVEPIVYPVTRRAPMLVKDGDHVEAGTQLIEGSVDPKKILRILGPRAAQVNIVEEVHTVYRSQGVDIHDKHIEVIVHQMLRRITVIDSGDTDLLPGELVDKARFKAANMEAVKNGGKPAAGRPELMGITKASLATDSWLSAASFQETTRVLTEAALNQKVDDLKGLKENVIIGKLIPAGTGLARYRNATVEPDKAIRDTIYPNFGLGGEGTDSSFGDTDLSDVDFSNIDFGDLKLGDDFNPDDFLDDNGGQTDLGDTL</sequence>
<evidence type="ECO:0000255" key="1">
    <source>
        <dbReference type="HAMAP-Rule" id="MF_01322"/>
    </source>
</evidence>
<protein>
    <recommendedName>
        <fullName evidence="1">DNA-directed RNA polymerase subunit beta'</fullName>
        <shortName evidence="1">RNAP subunit beta'</shortName>
        <ecNumber evidence="1">2.7.7.6</ecNumber>
    </recommendedName>
    <alternativeName>
        <fullName evidence="1">RNA polymerase subunit beta'</fullName>
    </alternativeName>
    <alternativeName>
        <fullName evidence="1">Transcriptase subunit beta'</fullName>
    </alternativeName>
</protein>
<name>RPOC_BIFAA</name>
<feature type="chain" id="PRO_0000308821" description="DNA-directed RNA polymerase subunit beta'">
    <location>
        <begin position="1"/>
        <end position="1337"/>
    </location>
</feature>
<feature type="binding site" evidence="1">
    <location>
        <position position="60"/>
    </location>
    <ligand>
        <name>Zn(2+)</name>
        <dbReference type="ChEBI" id="CHEBI:29105"/>
        <label>1</label>
    </ligand>
</feature>
<feature type="binding site" evidence="1">
    <location>
        <position position="62"/>
    </location>
    <ligand>
        <name>Zn(2+)</name>
        <dbReference type="ChEBI" id="CHEBI:29105"/>
        <label>1</label>
    </ligand>
</feature>
<feature type="binding site" evidence="1">
    <location>
        <position position="75"/>
    </location>
    <ligand>
        <name>Zn(2+)</name>
        <dbReference type="ChEBI" id="CHEBI:29105"/>
        <label>1</label>
    </ligand>
</feature>
<feature type="binding site" evidence="1">
    <location>
        <position position="78"/>
    </location>
    <ligand>
        <name>Zn(2+)</name>
        <dbReference type="ChEBI" id="CHEBI:29105"/>
        <label>1</label>
    </ligand>
</feature>
<feature type="binding site" evidence="1">
    <location>
        <position position="536"/>
    </location>
    <ligand>
        <name>Mg(2+)</name>
        <dbReference type="ChEBI" id="CHEBI:18420"/>
    </ligand>
</feature>
<feature type="binding site" evidence="1">
    <location>
        <position position="538"/>
    </location>
    <ligand>
        <name>Mg(2+)</name>
        <dbReference type="ChEBI" id="CHEBI:18420"/>
    </ligand>
</feature>
<feature type="binding site" evidence="1">
    <location>
        <position position="540"/>
    </location>
    <ligand>
        <name>Mg(2+)</name>
        <dbReference type="ChEBI" id="CHEBI:18420"/>
    </ligand>
</feature>
<feature type="binding site" evidence="1">
    <location>
        <position position="895"/>
    </location>
    <ligand>
        <name>Zn(2+)</name>
        <dbReference type="ChEBI" id="CHEBI:29105"/>
        <label>2</label>
    </ligand>
</feature>
<feature type="binding site" evidence="1">
    <location>
        <position position="974"/>
    </location>
    <ligand>
        <name>Zn(2+)</name>
        <dbReference type="ChEBI" id="CHEBI:29105"/>
        <label>2</label>
    </ligand>
</feature>
<feature type="binding site" evidence="1">
    <location>
        <position position="981"/>
    </location>
    <ligand>
        <name>Zn(2+)</name>
        <dbReference type="ChEBI" id="CHEBI:29105"/>
        <label>2</label>
    </ligand>
</feature>
<feature type="binding site" evidence="1">
    <location>
        <position position="984"/>
    </location>
    <ligand>
        <name>Zn(2+)</name>
        <dbReference type="ChEBI" id="CHEBI:29105"/>
        <label>2</label>
    </ligand>
</feature>
<keyword id="KW-0240">DNA-directed RNA polymerase</keyword>
<keyword id="KW-0460">Magnesium</keyword>
<keyword id="KW-0479">Metal-binding</keyword>
<keyword id="KW-0548">Nucleotidyltransferase</keyword>
<keyword id="KW-1185">Reference proteome</keyword>
<keyword id="KW-0804">Transcription</keyword>
<keyword id="KW-0808">Transferase</keyword>
<keyword id="KW-0862">Zinc</keyword>
<reference key="1">
    <citation type="submission" date="2006-12" db="EMBL/GenBank/DDBJ databases">
        <title>Bifidobacterium adolescentis complete genome sequence.</title>
        <authorList>
            <person name="Suzuki T."/>
            <person name="Tsuda Y."/>
            <person name="Kanou N."/>
            <person name="Inoue T."/>
            <person name="Kumazaki K."/>
            <person name="Nagano S."/>
            <person name="Hirai S."/>
            <person name="Tanaka K."/>
            <person name="Watanabe K."/>
        </authorList>
    </citation>
    <scope>NUCLEOTIDE SEQUENCE [LARGE SCALE GENOMIC DNA]</scope>
    <source>
        <strain>ATCC 15703 / DSM 20083 / NCTC 11814 / E194a</strain>
    </source>
</reference>
<comment type="function">
    <text evidence="1">DNA-dependent RNA polymerase catalyzes the transcription of DNA into RNA using the four ribonucleoside triphosphates as substrates.</text>
</comment>
<comment type="catalytic activity">
    <reaction evidence="1">
        <text>RNA(n) + a ribonucleoside 5'-triphosphate = RNA(n+1) + diphosphate</text>
        <dbReference type="Rhea" id="RHEA:21248"/>
        <dbReference type="Rhea" id="RHEA-COMP:14527"/>
        <dbReference type="Rhea" id="RHEA-COMP:17342"/>
        <dbReference type="ChEBI" id="CHEBI:33019"/>
        <dbReference type="ChEBI" id="CHEBI:61557"/>
        <dbReference type="ChEBI" id="CHEBI:140395"/>
        <dbReference type="EC" id="2.7.7.6"/>
    </reaction>
</comment>
<comment type="cofactor">
    <cofactor evidence="1">
        <name>Mg(2+)</name>
        <dbReference type="ChEBI" id="CHEBI:18420"/>
    </cofactor>
    <text evidence="1">Binds 1 Mg(2+) ion per subunit.</text>
</comment>
<comment type="cofactor">
    <cofactor evidence="1">
        <name>Zn(2+)</name>
        <dbReference type="ChEBI" id="CHEBI:29105"/>
    </cofactor>
    <text evidence="1">Binds 2 Zn(2+) ions per subunit.</text>
</comment>
<comment type="subunit">
    <text evidence="1">The RNAP catalytic core consists of 2 alpha, 1 beta, 1 beta' and 1 omega subunit. When a sigma factor is associated with the core the holoenzyme is formed, which can initiate transcription.</text>
</comment>
<comment type="similarity">
    <text evidence="1">Belongs to the RNA polymerase beta' chain family.</text>
</comment>
<gene>
    <name evidence="1" type="primary">rpoC</name>
    <name type="ordered locus">BAD_1318</name>
</gene>
<dbReference type="EC" id="2.7.7.6" evidence="1"/>
<dbReference type="EMBL" id="AP009256">
    <property type="protein sequence ID" value="BAF40099.1"/>
    <property type="molecule type" value="Genomic_DNA"/>
</dbReference>
<dbReference type="RefSeq" id="WP_011743636.1">
    <property type="nucleotide sequence ID" value="NZ_CAXVKE010000003.1"/>
</dbReference>
<dbReference type="SMR" id="A1A316"/>
<dbReference type="STRING" id="367928.BAD_1318"/>
<dbReference type="PaxDb" id="1680-BADO_1408"/>
<dbReference type="GeneID" id="4556644"/>
<dbReference type="KEGG" id="bad:BAD_1318"/>
<dbReference type="HOGENOM" id="CLU_000524_3_0_11"/>
<dbReference type="Proteomes" id="UP000008702">
    <property type="component" value="Chromosome"/>
</dbReference>
<dbReference type="GO" id="GO:0000428">
    <property type="term" value="C:DNA-directed RNA polymerase complex"/>
    <property type="evidence" value="ECO:0007669"/>
    <property type="project" value="UniProtKB-KW"/>
</dbReference>
<dbReference type="GO" id="GO:0003677">
    <property type="term" value="F:DNA binding"/>
    <property type="evidence" value="ECO:0007669"/>
    <property type="project" value="UniProtKB-UniRule"/>
</dbReference>
<dbReference type="GO" id="GO:0003899">
    <property type="term" value="F:DNA-directed RNA polymerase activity"/>
    <property type="evidence" value="ECO:0007669"/>
    <property type="project" value="UniProtKB-UniRule"/>
</dbReference>
<dbReference type="GO" id="GO:0000287">
    <property type="term" value="F:magnesium ion binding"/>
    <property type="evidence" value="ECO:0007669"/>
    <property type="project" value="UniProtKB-UniRule"/>
</dbReference>
<dbReference type="GO" id="GO:0008270">
    <property type="term" value="F:zinc ion binding"/>
    <property type="evidence" value="ECO:0007669"/>
    <property type="project" value="UniProtKB-UniRule"/>
</dbReference>
<dbReference type="GO" id="GO:0006351">
    <property type="term" value="P:DNA-templated transcription"/>
    <property type="evidence" value="ECO:0007669"/>
    <property type="project" value="UniProtKB-UniRule"/>
</dbReference>
<dbReference type="CDD" id="cd02655">
    <property type="entry name" value="RNAP_beta'_C"/>
    <property type="match status" value="1"/>
</dbReference>
<dbReference type="CDD" id="cd01609">
    <property type="entry name" value="RNAP_beta'_N"/>
    <property type="match status" value="1"/>
</dbReference>
<dbReference type="FunFam" id="1.10.150.390:FF:000002">
    <property type="entry name" value="DNA-directed RNA polymerase subunit beta"/>
    <property type="match status" value="1"/>
</dbReference>
<dbReference type="FunFam" id="4.10.860.120:FF:000001">
    <property type="entry name" value="DNA-directed RNA polymerase subunit beta"/>
    <property type="match status" value="1"/>
</dbReference>
<dbReference type="Gene3D" id="1.10.132.30">
    <property type="match status" value="1"/>
</dbReference>
<dbReference type="Gene3D" id="1.10.150.390">
    <property type="match status" value="1"/>
</dbReference>
<dbReference type="Gene3D" id="1.10.1790.20">
    <property type="match status" value="1"/>
</dbReference>
<dbReference type="Gene3D" id="1.10.40.90">
    <property type="match status" value="1"/>
</dbReference>
<dbReference type="Gene3D" id="2.40.40.20">
    <property type="match status" value="1"/>
</dbReference>
<dbReference type="Gene3D" id="2.40.50.100">
    <property type="match status" value="1"/>
</dbReference>
<dbReference type="Gene3D" id="4.10.860.120">
    <property type="entry name" value="RNA polymerase II, clamp domain"/>
    <property type="match status" value="1"/>
</dbReference>
<dbReference type="Gene3D" id="1.10.274.100">
    <property type="entry name" value="RNA polymerase Rpb1, domain 3"/>
    <property type="match status" value="1"/>
</dbReference>
<dbReference type="HAMAP" id="MF_01322">
    <property type="entry name" value="RNApol_bact_RpoC"/>
    <property type="match status" value="1"/>
</dbReference>
<dbReference type="InterPro" id="IPR045867">
    <property type="entry name" value="DNA-dir_RpoC_beta_prime"/>
</dbReference>
<dbReference type="InterPro" id="IPR012754">
    <property type="entry name" value="DNA-dir_RpoC_beta_prime_bact"/>
</dbReference>
<dbReference type="InterPro" id="IPR000722">
    <property type="entry name" value="RNA_pol_asu"/>
</dbReference>
<dbReference type="InterPro" id="IPR006592">
    <property type="entry name" value="RNA_pol_N"/>
</dbReference>
<dbReference type="InterPro" id="IPR007080">
    <property type="entry name" value="RNA_pol_Rpb1_1"/>
</dbReference>
<dbReference type="InterPro" id="IPR007066">
    <property type="entry name" value="RNA_pol_Rpb1_3"/>
</dbReference>
<dbReference type="InterPro" id="IPR042102">
    <property type="entry name" value="RNA_pol_Rpb1_3_sf"/>
</dbReference>
<dbReference type="InterPro" id="IPR007083">
    <property type="entry name" value="RNA_pol_Rpb1_4"/>
</dbReference>
<dbReference type="InterPro" id="IPR007081">
    <property type="entry name" value="RNA_pol_Rpb1_5"/>
</dbReference>
<dbReference type="InterPro" id="IPR044893">
    <property type="entry name" value="RNA_pol_Rpb1_clamp_domain"/>
</dbReference>
<dbReference type="InterPro" id="IPR038120">
    <property type="entry name" value="Rpb1_funnel_sf"/>
</dbReference>
<dbReference type="NCBIfam" id="NF011498">
    <property type="entry name" value="PRK14906.1"/>
    <property type="match status" value="1"/>
</dbReference>
<dbReference type="NCBIfam" id="TIGR02386">
    <property type="entry name" value="rpoC_TIGR"/>
    <property type="match status" value="1"/>
</dbReference>
<dbReference type="PANTHER" id="PTHR19376">
    <property type="entry name" value="DNA-DIRECTED RNA POLYMERASE"/>
    <property type="match status" value="1"/>
</dbReference>
<dbReference type="PANTHER" id="PTHR19376:SF54">
    <property type="entry name" value="DNA-DIRECTED RNA POLYMERASE SUBUNIT BETA"/>
    <property type="match status" value="1"/>
</dbReference>
<dbReference type="Pfam" id="PF04997">
    <property type="entry name" value="RNA_pol_Rpb1_1"/>
    <property type="match status" value="1"/>
</dbReference>
<dbReference type="Pfam" id="PF00623">
    <property type="entry name" value="RNA_pol_Rpb1_2"/>
    <property type="match status" value="1"/>
</dbReference>
<dbReference type="Pfam" id="PF04983">
    <property type="entry name" value="RNA_pol_Rpb1_3"/>
    <property type="match status" value="1"/>
</dbReference>
<dbReference type="Pfam" id="PF05000">
    <property type="entry name" value="RNA_pol_Rpb1_4"/>
    <property type="match status" value="1"/>
</dbReference>
<dbReference type="Pfam" id="PF04998">
    <property type="entry name" value="RNA_pol_Rpb1_5"/>
    <property type="match status" value="1"/>
</dbReference>
<dbReference type="SMART" id="SM00663">
    <property type="entry name" value="RPOLA_N"/>
    <property type="match status" value="1"/>
</dbReference>
<dbReference type="SUPFAM" id="SSF64484">
    <property type="entry name" value="beta and beta-prime subunits of DNA dependent RNA-polymerase"/>
    <property type="match status" value="1"/>
</dbReference>
<proteinExistence type="inferred from homology"/>